<gene>
    <name evidence="14" type="primary">Myoz1</name>
</gene>
<dbReference type="EMBL" id="AJ005620">
    <property type="protein sequence ID" value="CAB76836.1"/>
    <property type="molecule type" value="mRNA"/>
</dbReference>
<dbReference type="EMBL" id="AY013298">
    <property type="protein sequence ID" value="AAG38941.1"/>
    <property type="molecule type" value="mRNA"/>
</dbReference>
<dbReference type="EMBL" id="AK009077">
    <property type="protein sequence ID" value="BAB26059.1"/>
    <property type="molecule type" value="mRNA"/>
</dbReference>
<dbReference type="EMBL" id="AK041896">
    <property type="protein sequence ID" value="BAC31092.1"/>
    <property type="molecule type" value="mRNA"/>
</dbReference>
<dbReference type="EMBL" id="BC024660">
    <property type="protein sequence ID" value="AAH24660.1"/>
    <property type="molecule type" value="mRNA"/>
</dbReference>
<dbReference type="CCDS" id="CCDS36819.1"/>
<dbReference type="RefSeq" id="NP_067483.1">
    <property type="nucleotide sequence ID" value="NM_021508.3"/>
</dbReference>
<dbReference type="SMR" id="Q9JK37"/>
<dbReference type="BioGRID" id="208482">
    <property type="interactions" value="1"/>
</dbReference>
<dbReference type="FunCoup" id="Q9JK37">
    <property type="interactions" value="46"/>
</dbReference>
<dbReference type="STRING" id="10090.ENSMUSP00000087955"/>
<dbReference type="GlyGen" id="Q9JK37">
    <property type="glycosylation" value="1 site"/>
</dbReference>
<dbReference type="iPTMnet" id="Q9JK37"/>
<dbReference type="PhosphoSitePlus" id="Q9JK37"/>
<dbReference type="jPOST" id="Q9JK37"/>
<dbReference type="PaxDb" id="10090-ENSMUSP00000087955"/>
<dbReference type="ProteomicsDB" id="287339"/>
<dbReference type="Antibodypedia" id="29468">
    <property type="antibodies" value="294 antibodies from 27 providers"/>
</dbReference>
<dbReference type="DNASU" id="59011"/>
<dbReference type="Ensembl" id="ENSMUST00000090469.8">
    <property type="protein sequence ID" value="ENSMUSP00000087955.7"/>
    <property type="gene ID" value="ENSMUSG00000068697.8"/>
</dbReference>
<dbReference type="GeneID" id="59011"/>
<dbReference type="KEGG" id="mmu:59011"/>
<dbReference type="UCSC" id="uc007skd.1">
    <property type="organism name" value="mouse"/>
</dbReference>
<dbReference type="AGR" id="MGI:1929471"/>
<dbReference type="CTD" id="58529"/>
<dbReference type="MGI" id="MGI:1929471">
    <property type="gene designation" value="Myoz1"/>
</dbReference>
<dbReference type="VEuPathDB" id="HostDB:ENSMUSG00000068697"/>
<dbReference type="eggNOG" id="ENOG502R4N9">
    <property type="taxonomic scope" value="Eukaryota"/>
</dbReference>
<dbReference type="GeneTree" id="ENSGT00950000183027"/>
<dbReference type="HOGENOM" id="CLU_071316_0_0_1"/>
<dbReference type="InParanoid" id="Q9JK37"/>
<dbReference type="OMA" id="TFQMPKI"/>
<dbReference type="OrthoDB" id="9901707at2759"/>
<dbReference type="PhylomeDB" id="Q9JK37"/>
<dbReference type="TreeFam" id="TF331748"/>
<dbReference type="BioGRID-ORCS" id="59011">
    <property type="hits" value="3 hits in 77 CRISPR screens"/>
</dbReference>
<dbReference type="ChiTaRS" id="Myoz1">
    <property type="organism name" value="mouse"/>
</dbReference>
<dbReference type="PRO" id="PR:Q9JK37"/>
<dbReference type="Proteomes" id="UP000000589">
    <property type="component" value="Chromosome 14"/>
</dbReference>
<dbReference type="RNAct" id="Q9JK37">
    <property type="molecule type" value="protein"/>
</dbReference>
<dbReference type="Bgee" id="ENSMUSG00000068697">
    <property type="expression patterns" value="Expressed in temporalis muscle and 100 other cell types or tissues"/>
</dbReference>
<dbReference type="GO" id="GO:0015629">
    <property type="term" value="C:actin cytoskeleton"/>
    <property type="evidence" value="ECO:0000314"/>
    <property type="project" value="MGI"/>
</dbReference>
<dbReference type="GO" id="GO:0005634">
    <property type="term" value="C:nucleus"/>
    <property type="evidence" value="ECO:0007669"/>
    <property type="project" value="UniProtKB-SubCell"/>
</dbReference>
<dbReference type="GO" id="GO:0031143">
    <property type="term" value="C:pseudopodium"/>
    <property type="evidence" value="ECO:0007669"/>
    <property type="project" value="UniProtKB-SubCell"/>
</dbReference>
<dbReference type="GO" id="GO:0030018">
    <property type="term" value="C:Z disc"/>
    <property type="evidence" value="ECO:0007669"/>
    <property type="project" value="InterPro"/>
</dbReference>
<dbReference type="GO" id="GO:0042805">
    <property type="term" value="F:actinin binding"/>
    <property type="evidence" value="ECO:0007669"/>
    <property type="project" value="Ensembl"/>
</dbReference>
<dbReference type="GO" id="GO:0051373">
    <property type="term" value="F:FATZ binding"/>
    <property type="evidence" value="ECO:0007669"/>
    <property type="project" value="Ensembl"/>
</dbReference>
<dbReference type="GO" id="GO:0140693">
    <property type="term" value="F:molecular condensate scaffold activity"/>
    <property type="evidence" value="ECO:0007669"/>
    <property type="project" value="Ensembl"/>
</dbReference>
<dbReference type="GO" id="GO:0004865">
    <property type="term" value="F:protein serine/threonine phosphatase inhibitor activity"/>
    <property type="evidence" value="ECO:0000315"/>
    <property type="project" value="BHF-UCL"/>
</dbReference>
<dbReference type="GO" id="GO:0070885">
    <property type="term" value="P:negative regulation of calcineurin-NFAT signaling cascade"/>
    <property type="evidence" value="ECO:0000315"/>
    <property type="project" value="BHF-UCL"/>
</dbReference>
<dbReference type="GO" id="GO:0043417">
    <property type="term" value="P:negative regulation of skeletal muscle tissue regeneration"/>
    <property type="evidence" value="ECO:0000315"/>
    <property type="project" value="BHF-UCL"/>
</dbReference>
<dbReference type="GO" id="GO:0000122">
    <property type="term" value="P:negative regulation of transcription by RNA polymerase II"/>
    <property type="evidence" value="ECO:0000315"/>
    <property type="project" value="BHF-UCL"/>
</dbReference>
<dbReference type="GO" id="GO:0045214">
    <property type="term" value="P:sarcomere organization"/>
    <property type="evidence" value="ECO:0000315"/>
    <property type="project" value="BHF-UCL"/>
</dbReference>
<dbReference type="GO" id="GO:0043503">
    <property type="term" value="P:skeletal muscle fiber adaptation"/>
    <property type="evidence" value="ECO:0000315"/>
    <property type="project" value="BHF-UCL"/>
</dbReference>
<dbReference type="GO" id="GO:0007519">
    <property type="term" value="P:skeletal muscle tissue development"/>
    <property type="evidence" value="ECO:0000315"/>
    <property type="project" value="BHF-UCL"/>
</dbReference>
<dbReference type="GO" id="GO:0042060">
    <property type="term" value="P:wound healing"/>
    <property type="evidence" value="ECO:0000315"/>
    <property type="project" value="BHF-UCL"/>
</dbReference>
<dbReference type="InterPro" id="IPR008438">
    <property type="entry name" value="MYOZ"/>
</dbReference>
<dbReference type="PANTHER" id="PTHR15941">
    <property type="entry name" value="MYOZENIN"/>
    <property type="match status" value="1"/>
</dbReference>
<dbReference type="PANTHER" id="PTHR15941:SF11">
    <property type="entry name" value="MYOZENIN-1"/>
    <property type="match status" value="1"/>
</dbReference>
<dbReference type="Pfam" id="PF05556">
    <property type="entry name" value="Calsarcin"/>
    <property type="match status" value="1"/>
</dbReference>
<organism>
    <name type="scientific">Mus musculus</name>
    <name type="common">Mouse</name>
    <dbReference type="NCBI Taxonomy" id="10090"/>
    <lineage>
        <taxon>Eukaryota</taxon>
        <taxon>Metazoa</taxon>
        <taxon>Chordata</taxon>
        <taxon>Craniata</taxon>
        <taxon>Vertebrata</taxon>
        <taxon>Euteleostomi</taxon>
        <taxon>Mammalia</taxon>
        <taxon>Eutheria</taxon>
        <taxon>Euarchontoglires</taxon>
        <taxon>Glires</taxon>
        <taxon>Rodentia</taxon>
        <taxon>Myomorpha</taxon>
        <taxon>Muroidea</taxon>
        <taxon>Muridae</taxon>
        <taxon>Murinae</taxon>
        <taxon>Mus</taxon>
        <taxon>Mus</taxon>
    </lineage>
</organism>
<comment type="function">
    <text evidence="6 7 8">Myozenins may serve as intracellular binding proteins involved in linking Z-disk proteins such as alpha-actinin, gamma-filamin, TCAP/telethonin, LDB3/ZASP and localizing calcineurin signaling to the sarcomere. Plays an important role in the modulation of calcineurin signaling. May play a role in myofibrillogenesis.</text>
</comment>
<comment type="subunit">
    <text evidence="2 5">Interacts with ACTN2, ACTN3, FLNA, FLNB, FLNC, LDB3, PPP3CA and TCAP. Interacts via its C-terminal region with MYOT.</text>
</comment>
<comment type="subcellular location">
    <subcellularLocation>
        <location evidence="1">Nucleus</location>
    </subcellularLocation>
    <subcellularLocation>
        <location evidence="1">Cell projection</location>
        <location evidence="1">Pseudopodium</location>
    </subcellularLocation>
    <text evidence="1">Localized to the nucleus and pseudopodia of undifferentiated cells and detected throughout the myotubes of differentiated cells. Colocalizes with ACTN2, FLNC and MYOT at the Z-lines of skeletal muscle (By similarity).</text>
</comment>
<comment type="tissue specificity">
    <text evidence="4 5">Expressed primarily in skeletal muscle and specifically enriched in the gastrocnemius, which is composed predominantly of fast-twitch muscle fibers. Detected at lower levels in heart.</text>
</comment>
<comment type="developmental stage">
    <text evidence="5">At 9.5 dpc, expressed at significant levels in cardiac muscle with lower levels detected in skeletal muscle of tongue. At 15.5 dpc, cardiac expression is down-regulated and only weakly detected in atria, whereas skeletal muscle expression is more robust.</text>
</comment>
<comment type="similarity">
    <text evidence="8">Belongs to the myozenin family.</text>
</comment>
<evidence type="ECO:0000250" key="1"/>
<evidence type="ECO:0000250" key="2">
    <source>
        <dbReference type="UniProtKB" id="Q9NP98"/>
    </source>
</evidence>
<evidence type="ECO:0000256" key="3">
    <source>
        <dbReference type="SAM" id="MobiDB-lite"/>
    </source>
</evidence>
<evidence type="ECO:0000269" key="4">
    <source>
    </source>
</evidence>
<evidence type="ECO:0000269" key="5">
    <source>
    </source>
</evidence>
<evidence type="ECO:0000303" key="6">
    <source>
    </source>
</evidence>
<evidence type="ECO:0000303" key="7">
    <source>
    </source>
</evidence>
<evidence type="ECO:0000305" key="8"/>
<evidence type="ECO:0000312" key="9">
    <source>
        <dbReference type="EMBL" id="AAG38941.1"/>
    </source>
</evidence>
<evidence type="ECO:0000312" key="10">
    <source>
        <dbReference type="EMBL" id="AAH24660.1"/>
    </source>
</evidence>
<evidence type="ECO:0000312" key="11">
    <source>
        <dbReference type="EMBL" id="BAB26059.1"/>
    </source>
</evidence>
<evidence type="ECO:0000312" key="12">
    <source>
        <dbReference type="EMBL" id="BAC31092.1"/>
    </source>
</evidence>
<evidence type="ECO:0000312" key="13">
    <source>
        <dbReference type="EMBL" id="CAB76836.1"/>
    </source>
</evidence>
<evidence type="ECO:0000312" key="14">
    <source>
        <dbReference type="MGI" id="MGI:1929471"/>
    </source>
</evidence>
<evidence type="ECO:0007744" key="15">
    <source>
    </source>
</evidence>
<sequence length="296" mass="31457">MPLSGTPAPNKRRKSSKLIMELTGGGRESSGLNLGKKISVPRDVMLEELSLLTNRGSKMFKLRQMRVEKFIYENHPDVFSDSSMDHFQKFLPTVGGQLETAGQGFSYGKGSSGGQAGSSGSAGQYGSDRHQQGSGFGAGGSGGPGGQAGGGGAPGTVGLGEPGSGDQAGGDGKHVTVFKTYISPWDRAMGVDPQQKVELGIDLLAYGAKAELPKYKSFNRTAMPYGGYEKASKRMTFQMPKFDLGPLLSEPLVLYNQNLSNRPSFNRTPIPWLSSGEHVDYNVDVGIPLDGETEEL</sequence>
<feature type="chain" id="PRO_0000111096" description="Myozenin-1">
    <location>
        <begin position="1"/>
        <end position="296"/>
    </location>
</feature>
<feature type="region of interest" description="Disordered" evidence="3">
    <location>
        <begin position="105"/>
        <end position="172"/>
    </location>
</feature>
<feature type="compositionally biased region" description="Gly residues" evidence="3">
    <location>
        <begin position="105"/>
        <end position="117"/>
    </location>
</feature>
<feature type="compositionally biased region" description="Gly residues" evidence="3">
    <location>
        <begin position="134"/>
        <end position="170"/>
    </location>
</feature>
<feature type="modified residue" description="Phosphoserine" evidence="15">
    <location>
        <position position="82"/>
    </location>
</feature>
<feature type="sequence conflict" description="In Ref. 3; BAB26059." evidence="8" ref="3">
    <original>T</original>
    <variation>A</variation>
    <location>
        <position position="100"/>
    </location>
</feature>
<feature type="sequence conflict" description="In Ref. 3; BAC31092." evidence="8" ref="3">
    <original>Q</original>
    <variation>H</variation>
    <location>
        <position position="131"/>
    </location>
</feature>
<reference evidence="8 13" key="1">
    <citation type="journal article" date="2000" name="J. Biol. Chem.">
        <title>FATZ, a filamin-, actinin-, and telethonin-binding protein of the Z-disc of skeletal muscle.</title>
        <authorList>
            <person name="Faulkner G."/>
            <person name="Pallavicini A."/>
            <person name="Comelli A."/>
            <person name="Salamon M."/>
            <person name="Bortoletto G."/>
            <person name="Ievolella C."/>
            <person name="Trevisan S."/>
            <person name="Kojic' S."/>
            <person name="Dalla Vecchia F."/>
            <person name="Laveder P."/>
            <person name="Valle G."/>
            <person name="Lanfranchi G."/>
        </authorList>
    </citation>
    <scope>NUCLEOTIDE SEQUENCE [MRNA]</scope>
    <scope>TISSUE SPECIFICITY</scope>
    <source>
        <tissue evidence="13">Diaphragm</tissue>
    </source>
</reference>
<reference evidence="8 9" key="2">
    <citation type="journal article" date="2000" name="Proc. Natl. Acad. Sci. U.S.A.">
        <title>Calsarcins, a novel family of sarcomeric calcineurin-binding proteins.</title>
        <authorList>
            <person name="Frey N."/>
            <person name="Richardson J.A."/>
            <person name="Olson E.N."/>
        </authorList>
    </citation>
    <scope>NUCLEOTIDE SEQUENCE [MRNA]</scope>
    <scope>INTERACTION WITH PPP3CA</scope>
    <scope>TISSUE SPECIFICITY</scope>
    <scope>DEVELOPMENTAL STAGE</scope>
</reference>
<reference evidence="11" key="3">
    <citation type="journal article" date="2005" name="Science">
        <title>The transcriptional landscape of the mammalian genome.</title>
        <authorList>
            <person name="Carninci P."/>
            <person name="Kasukawa T."/>
            <person name="Katayama S."/>
            <person name="Gough J."/>
            <person name="Frith M.C."/>
            <person name="Maeda N."/>
            <person name="Oyama R."/>
            <person name="Ravasi T."/>
            <person name="Lenhard B."/>
            <person name="Wells C."/>
            <person name="Kodzius R."/>
            <person name="Shimokawa K."/>
            <person name="Bajic V.B."/>
            <person name="Brenner S.E."/>
            <person name="Batalov S."/>
            <person name="Forrest A.R."/>
            <person name="Zavolan M."/>
            <person name="Davis M.J."/>
            <person name="Wilming L.G."/>
            <person name="Aidinis V."/>
            <person name="Allen J.E."/>
            <person name="Ambesi-Impiombato A."/>
            <person name="Apweiler R."/>
            <person name="Aturaliya R.N."/>
            <person name="Bailey T.L."/>
            <person name="Bansal M."/>
            <person name="Baxter L."/>
            <person name="Beisel K.W."/>
            <person name="Bersano T."/>
            <person name="Bono H."/>
            <person name="Chalk A.M."/>
            <person name="Chiu K.P."/>
            <person name="Choudhary V."/>
            <person name="Christoffels A."/>
            <person name="Clutterbuck D.R."/>
            <person name="Crowe M.L."/>
            <person name="Dalla E."/>
            <person name="Dalrymple B.P."/>
            <person name="de Bono B."/>
            <person name="Della Gatta G."/>
            <person name="di Bernardo D."/>
            <person name="Down T."/>
            <person name="Engstrom P."/>
            <person name="Fagiolini M."/>
            <person name="Faulkner G."/>
            <person name="Fletcher C.F."/>
            <person name="Fukushima T."/>
            <person name="Furuno M."/>
            <person name="Futaki S."/>
            <person name="Gariboldi M."/>
            <person name="Georgii-Hemming P."/>
            <person name="Gingeras T.R."/>
            <person name="Gojobori T."/>
            <person name="Green R.E."/>
            <person name="Gustincich S."/>
            <person name="Harbers M."/>
            <person name="Hayashi Y."/>
            <person name="Hensch T.K."/>
            <person name="Hirokawa N."/>
            <person name="Hill D."/>
            <person name="Huminiecki L."/>
            <person name="Iacono M."/>
            <person name="Ikeo K."/>
            <person name="Iwama A."/>
            <person name="Ishikawa T."/>
            <person name="Jakt M."/>
            <person name="Kanapin A."/>
            <person name="Katoh M."/>
            <person name="Kawasawa Y."/>
            <person name="Kelso J."/>
            <person name="Kitamura H."/>
            <person name="Kitano H."/>
            <person name="Kollias G."/>
            <person name="Krishnan S.P."/>
            <person name="Kruger A."/>
            <person name="Kummerfeld S.K."/>
            <person name="Kurochkin I.V."/>
            <person name="Lareau L.F."/>
            <person name="Lazarevic D."/>
            <person name="Lipovich L."/>
            <person name="Liu J."/>
            <person name="Liuni S."/>
            <person name="McWilliam S."/>
            <person name="Madan Babu M."/>
            <person name="Madera M."/>
            <person name="Marchionni L."/>
            <person name="Matsuda H."/>
            <person name="Matsuzawa S."/>
            <person name="Miki H."/>
            <person name="Mignone F."/>
            <person name="Miyake S."/>
            <person name="Morris K."/>
            <person name="Mottagui-Tabar S."/>
            <person name="Mulder N."/>
            <person name="Nakano N."/>
            <person name="Nakauchi H."/>
            <person name="Ng P."/>
            <person name="Nilsson R."/>
            <person name="Nishiguchi S."/>
            <person name="Nishikawa S."/>
            <person name="Nori F."/>
            <person name="Ohara O."/>
            <person name="Okazaki Y."/>
            <person name="Orlando V."/>
            <person name="Pang K.C."/>
            <person name="Pavan W.J."/>
            <person name="Pavesi G."/>
            <person name="Pesole G."/>
            <person name="Petrovsky N."/>
            <person name="Piazza S."/>
            <person name="Reed J."/>
            <person name="Reid J.F."/>
            <person name="Ring B.Z."/>
            <person name="Ringwald M."/>
            <person name="Rost B."/>
            <person name="Ruan Y."/>
            <person name="Salzberg S.L."/>
            <person name="Sandelin A."/>
            <person name="Schneider C."/>
            <person name="Schoenbach C."/>
            <person name="Sekiguchi K."/>
            <person name="Semple C.A."/>
            <person name="Seno S."/>
            <person name="Sessa L."/>
            <person name="Sheng Y."/>
            <person name="Shibata Y."/>
            <person name="Shimada H."/>
            <person name="Shimada K."/>
            <person name="Silva D."/>
            <person name="Sinclair B."/>
            <person name="Sperling S."/>
            <person name="Stupka E."/>
            <person name="Sugiura K."/>
            <person name="Sultana R."/>
            <person name="Takenaka Y."/>
            <person name="Taki K."/>
            <person name="Tammoja K."/>
            <person name="Tan S.L."/>
            <person name="Tang S."/>
            <person name="Taylor M.S."/>
            <person name="Tegner J."/>
            <person name="Teichmann S.A."/>
            <person name="Ueda H.R."/>
            <person name="van Nimwegen E."/>
            <person name="Verardo R."/>
            <person name="Wei C.L."/>
            <person name="Yagi K."/>
            <person name="Yamanishi H."/>
            <person name="Zabarovsky E."/>
            <person name="Zhu S."/>
            <person name="Zimmer A."/>
            <person name="Hide W."/>
            <person name="Bult C."/>
            <person name="Grimmond S.M."/>
            <person name="Teasdale R.D."/>
            <person name="Liu E.T."/>
            <person name="Brusic V."/>
            <person name="Quackenbush J."/>
            <person name="Wahlestedt C."/>
            <person name="Mattick J.S."/>
            <person name="Hume D.A."/>
            <person name="Kai C."/>
            <person name="Sasaki D."/>
            <person name="Tomaru Y."/>
            <person name="Fukuda S."/>
            <person name="Kanamori-Katayama M."/>
            <person name="Suzuki M."/>
            <person name="Aoki J."/>
            <person name="Arakawa T."/>
            <person name="Iida J."/>
            <person name="Imamura K."/>
            <person name="Itoh M."/>
            <person name="Kato T."/>
            <person name="Kawaji H."/>
            <person name="Kawagashira N."/>
            <person name="Kawashima T."/>
            <person name="Kojima M."/>
            <person name="Kondo S."/>
            <person name="Konno H."/>
            <person name="Nakano K."/>
            <person name="Ninomiya N."/>
            <person name="Nishio T."/>
            <person name="Okada M."/>
            <person name="Plessy C."/>
            <person name="Shibata K."/>
            <person name="Shiraki T."/>
            <person name="Suzuki S."/>
            <person name="Tagami M."/>
            <person name="Waki K."/>
            <person name="Watahiki A."/>
            <person name="Okamura-Oho Y."/>
            <person name="Suzuki H."/>
            <person name="Kawai J."/>
            <person name="Hayashizaki Y."/>
        </authorList>
    </citation>
    <scope>NUCLEOTIDE SEQUENCE [LARGE SCALE MRNA]</scope>
    <source>
        <strain evidence="11">C57BL/6J</strain>
        <tissue evidence="12">Thymus</tissue>
        <tissue evidence="11">Tongue</tissue>
    </source>
</reference>
<reference evidence="10" key="4">
    <citation type="journal article" date="2004" name="Genome Res.">
        <title>The status, quality, and expansion of the NIH full-length cDNA project: the Mammalian Gene Collection (MGC).</title>
        <authorList>
            <consortium name="The MGC Project Team"/>
        </authorList>
    </citation>
    <scope>NUCLEOTIDE SEQUENCE [LARGE SCALE MRNA]</scope>
    <source>
        <strain evidence="10">FVB/N</strain>
        <tissue evidence="10">Mammary gland</tissue>
    </source>
</reference>
<reference key="5">
    <citation type="journal article" date="2010" name="Cell">
        <title>A tissue-specific atlas of mouse protein phosphorylation and expression.</title>
        <authorList>
            <person name="Huttlin E.L."/>
            <person name="Jedrychowski M.P."/>
            <person name="Elias J.E."/>
            <person name="Goswami T."/>
            <person name="Rad R."/>
            <person name="Beausoleil S.A."/>
            <person name="Villen J."/>
            <person name="Haas W."/>
            <person name="Sowa M.E."/>
            <person name="Gygi S.P."/>
        </authorList>
    </citation>
    <scope>PHOSPHORYLATION [LARGE SCALE ANALYSIS] AT SER-82</scope>
    <scope>IDENTIFICATION BY MASS SPECTROMETRY [LARGE SCALE ANALYSIS]</scope>
    <source>
        <tissue>Brown adipose tissue</tissue>
    </source>
</reference>
<keyword id="KW-0966">Cell projection</keyword>
<keyword id="KW-0539">Nucleus</keyword>
<keyword id="KW-0597">Phosphoprotein</keyword>
<keyword id="KW-1185">Reference proteome</keyword>
<proteinExistence type="evidence at protein level"/>
<protein>
    <recommendedName>
        <fullName>Myozenin-1</fullName>
    </recommendedName>
    <alternativeName>
        <fullName>Calsarcin-2</fullName>
    </alternativeName>
    <alternativeName>
        <fullName>Filamin-, actinin- and telethonin-binding protein</fullName>
    </alternativeName>
    <alternativeName>
        <fullName>Protein FATZ</fullName>
    </alternativeName>
</protein>
<name>MYOZ1_MOUSE</name>
<accession>Q9JK37</accession>
<accession>Q8C9L3</accession>
<accession>Q9D7N4</accession>